<feature type="chain" id="PRO_0000334293" description="Na(+)/H(+) antiporter NhaA">
    <location>
        <begin position="1"/>
        <end position="384"/>
    </location>
</feature>
<feature type="transmembrane region" description="Helical" evidence="1">
    <location>
        <begin position="17"/>
        <end position="37"/>
    </location>
</feature>
<feature type="transmembrane region" description="Helical" evidence="1">
    <location>
        <begin position="53"/>
        <end position="73"/>
    </location>
</feature>
<feature type="transmembrane region" description="Helical" evidence="1">
    <location>
        <begin position="89"/>
        <end position="109"/>
    </location>
</feature>
<feature type="transmembrane region" description="Helical" evidence="1">
    <location>
        <begin position="118"/>
        <end position="138"/>
    </location>
</feature>
<feature type="transmembrane region" description="Helical" evidence="1">
    <location>
        <begin position="147"/>
        <end position="167"/>
    </location>
</feature>
<feature type="transmembrane region" description="Helical" evidence="1">
    <location>
        <begin position="171"/>
        <end position="191"/>
    </location>
</feature>
<feature type="transmembrane region" description="Helical" evidence="1">
    <location>
        <begin position="198"/>
        <end position="218"/>
    </location>
</feature>
<feature type="transmembrane region" description="Helical" evidence="1">
    <location>
        <begin position="251"/>
        <end position="271"/>
    </location>
</feature>
<feature type="transmembrane region" description="Helical" evidence="1">
    <location>
        <begin position="283"/>
        <end position="303"/>
    </location>
</feature>
<feature type="transmembrane region" description="Helical" evidence="1">
    <location>
        <begin position="321"/>
        <end position="341"/>
    </location>
</feature>
<feature type="transmembrane region" description="Helical" evidence="1">
    <location>
        <begin position="354"/>
        <end position="374"/>
    </location>
</feature>
<sequence>MKITGLFKEFFESEKSSGLFLISCTLFSLVIANSAIANSYLHFWHANLAGNSLEYWINDGLMTIFFLLIGLELEREVYDGELSNIKDAMLPIFGAIGGMIVPAGLFLVMNFGTKTQSGAGIPMATDIAFALAILSLLGNKIPLSLKIFLTALAVIDDLGAILIIAVFYTKTLLWTNLCIALGIFGFLLILNRLKIRNLIPYLIGGVFMWYFMLHSGVHATITGVLLAFAIPFGNGDSRSTSYILQHFLHKPVAFFILPLFALANTAIVLSSNISETLIQNYSIGIALGLIIGKPLGIFLLSMLAVSLGICKLPDDLNWKSILAVGFLGGIGFTMSIFITLLAFNDDTIINNAKFVILISSLIAGIIGYFSLKYVLKNTIIENKN</sequence>
<gene>
    <name evidence="1" type="primary">nhaA</name>
    <name type="ordered locus">FP1774</name>
</gene>
<reference key="1">
    <citation type="journal article" date="2007" name="Nat. Biotechnol.">
        <title>Complete genome sequence of the fish pathogen Flavobacterium psychrophilum.</title>
        <authorList>
            <person name="Duchaud E."/>
            <person name="Boussaha M."/>
            <person name="Loux V."/>
            <person name="Bernardet J.-F."/>
            <person name="Michel C."/>
            <person name="Kerouault B."/>
            <person name="Mondot S."/>
            <person name="Nicolas P."/>
            <person name="Bossy R."/>
            <person name="Caron C."/>
            <person name="Bessieres P."/>
            <person name="Gibrat J.-F."/>
            <person name="Claverol S."/>
            <person name="Dumetz F."/>
            <person name="Le Henaff M."/>
            <person name="Benmansour A."/>
        </authorList>
    </citation>
    <scope>NUCLEOTIDE SEQUENCE [LARGE SCALE GENOMIC DNA]</scope>
    <source>
        <strain>ATCC 49511 / DSM 21280 / CIP 103535 / JIP02/86</strain>
    </source>
</reference>
<name>NHAA_FLAPJ</name>
<protein>
    <recommendedName>
        <fullName evidence="1">Na(+)/H(+) antiporter NhaA</fullName>
    </recommendedName>
    <alternativeName>
        <fullName evidence="1">Sodium/proton antiporter NhaA</fullName>
    </alternativeName>
</protein>
<proteinExistence type="inferred from homology"/>
<keyword id="KW-0050">Antiport</keyword>
<keyword id="KW-0997">Cell inner membrane</keyword>
<keyword id="KW-1003">Cell membrane</keyword>
<keyword id="KW-0406">Ion transport</keyword>
<keyword id="KW-0472">Membrane</keyword>
<keyword id="KW-1185">Reference proteome</keyword>
<keyword id="KW-0915">Sodium</keyword>
<keyword id="KW-0739">Sodium transport</keyword>
<keyword id="KW-0812">Transmembrane</keyword>
<keyword id="KW-1133">Transmembrane helix</keyword>
<keyword id="KW-0813">Transport</keyword>
<evidence type="ECO:0000255" key="1">
    <source>
        <dbReference type="HAMAP-Rule" id="MF_01844"/>
    </source>
</evidence>
<accession>A6H0G8</accession>
<organism>
    <name type="scientific">Flavobacterium psychrophilum (strain ATCC 49511 / DSM 21280 / CIP 103535 / JIP02/86)</name>
    <dbReference type="NCBI Taxonomy" id="402612"/>
    <lineage>
        <taxon>Bacteria</taxon>
        <taxon>Pseudomonadati</taxon>
        <taxon>Bacteroidota</taxon>
        <taxon>Flavobacteriia</taxon>
        <taxon>Flavobacteriales</taxon>
        <taxon>Flavobacteriaceae</taxon>
        <taxon>Flavobacterium</taxon>
    </lineage>
</organism>
<comment type="function">
    <text evidence="1">Na(+)/H(+) antiporter that extrudes sodium in exchange for external protons.</text>
</comment>
<comment type="catalytic activity">
    <reaction evidence="1">
        <text>Na(+)(in) + 2 H(+)(out) = Na(+)(out) + 2 H(+)(in)</text>
        <dbReference type="Rhea" id="RHEA:29251"/>
        <dbReference type="ChEBI" id="CHEBI:15378"/>
        <dbReference type="ChEBI" id="CHEBI:29101"/>
    </reaction>
    <physiologicalReaction direction="left-to-right" evidence="1">
        <dbReference type="Rhea" id="RHEA:29252"/>
    </physiologicalReaction>
</comment>
<comment type="subcellular location">
    <subcellularLocation>
        <location evidence="1">Cell inner membrane</location>
        <topology evidence="1">Multi-pass membrane protein</topology>
    </subcellularLocation>
</comment>
<comment type="similarity">
    <text evidence="1">Belongs to the NhaA Na(+)/H(+) (TC 2.A.33) antiporter family.</text>
</comment>
<dbReference type="EMBL" id="AM398681">
    <property type="protein sequence ID" value="CAL43841.1"/>
    <property type="molecule type" value="Genomic_DNA"/>
</dbReference>
<dbReference type="RefSeq" id="WP_011963884.1">
    <property type="nucleotide sequence ID" value="NC_009613.3"/>
</dbReference>
<dbReference type="RefSeq" id="YP_001296648.1">
    <property type="nucleotide sequence ID" value="NC_009613.3"/>
</dbReference>
<dbReference type="SMR" id="A6H0G8"/>
<dbReference type="STRING" id="402612.FP1774"/>
<dbReference type="EnsemblBacteria" id="CAL43841">
    <property type="protein sequence ID" value="CAL43841"/>
    <property type="gene ID" value="FP1774"/>
</dbReference>
<dbReference type="GeneID" id="66552040"/>
<dbReference type="KEGG" id="fps:FP1774"/>
<dbReference type="PATRIC" id="fig|402612.5.peg.1793"/>
<dbReference type="eggNOG" id="COG3004">
    <property type="taxonomic scope" value="Bacteria"/>
</dbReference>
<dbReference type="HOGENOM" id="CLU_015803_1_0_10"/>
<dbReference type="OrthoDB" id="9808135at2"/>
<dbReference type="Proteomes" id="UP000006394">
    <property type="component" value="Chromosome"/>
</dbReference>
<dbReference type="GO" id="GO:0005886">
    <property type="term" value="C:plasma membrane"/>
    <property type="evidence" value="ECO:0007669"/>
    <property type="project" value="UniProtKB-SubCell"/>
</dbReference>
<dbReference type="GO" id="GO:0015385">
    <property type="term" value="F:sodium:proton antiporter activity"/>
    <property type="evidence" value="ECO:0007669"/>
    <property type="project" value="TreeGrafter"/>
</dbReference>
<dbReference type="GO" id="GO:0006885">
    <property type="term" value="P:regulation of pH"/>
    <property type="evidence" value="ECO:0007669"/>
    <property type="project" value="InterPro"/>
</dbReference>
<dbReference type="Gene3D" id="1.20.1530.10">
    <property type="entry name" value="Na+/H+ antiporter like domain"/>
    <property type="match status" value="1"/>
</dbReference>
<dbReference type="HAMAP" id="MF_01844">
    <property type="entry name" value="NhaA"/>
    <property type="match status" value="1"/>
</dbReference>
<dbReference type="InterPro" id="IPR023171">
    <property type="entry name" value="Na/H_antiporter_dom_sf"/>
</dbReference>
<dbReference type="InterPro" id="IPR004670">
    <property type="entry name" value="NhaA"/>
</dbReference>
<dbReference type="NCBIfam" id="TIGR00773">
    <property type="entry name" value="NhaA"/>
    <property type="match status" value="1"/>
</dbReference>
<dbReference type="NCBIfam" id="NF007111">
    <property type="entry name" value="PRK09560.1"/>
    <property type="match status" value="1"/>
</dbReference>
<dbReference type="PANTHER" id="PTHR30341:SF0">
    <property type="entry name" value="NA(+)_H(+) ANTIPORTER NHAA"/>
    <property type="match status" value="1"/>
</dbReference>
<dbReference type="PANTHER" id="PTHR30341">
    <property type="entry name" value="SODIUM ION/PROTON ANTIPORTER NHAA-RELATED"/>
    <property type="match status" value="1"/>
</dbReference>
<dbReference type="Pfam" id="PF06965">
    <property type="entry name" value="Na_H_antiport_1"/>
    <property type="match status" value="1"/>
</dbReference>